<dbReference type="EC" id="2.4.2.7" evidence="1"/>
<dbReference type="EMBL" id="CP001029">
    <property type="protein sequence ID" value="ACB78753.1"/>
    <property type="molecule type" value="Genomic_DNA"/>
</dbReference>
<dbReference type="RefSeq" id="WP_012452509.1">
    <property type="nucleotide sequence ID" value="NC_010725.1"/>
</dbReference>
<dbReference type="SMR" id="B1ZKA1"/>
<dbReference type="STRING" id="441620.Mpop_0575"/>
<dbReference type="KEGG" id="mpo:Mpop_0575"/>
<dbReference type="eggNOG" id="COG0503">
    <property type="taxonomic scope" value="Bacteria"/>
</dbReference>
<dbReference type="HOGENOM" id="CLU_063339_3_0_5"/>
<dbReference type="OrthoDB" id="9803963at2"/>
<dbReference type="UniPathway" id="UPA00588">
    <property type="reaction ID" value="UER00646"/>
</dbReference>
<dbReference type="Proteomes" id="UP000007136">
    <property type="component" value="Chromosome"/>
</dbReference>
<dbReference type="GO" id="GO:0005737">
    <property type="term" value="C:cytoplasm"/>
    <property type="evidence" value="ECO:0007669"/>
    <property type="project" value="UniProtKB-SubCell"/>
</dbReference>
<dbReference type="GO" id="GO:0002055">
    <property type="term" value="F:adenine binding"/>
    <property type="evidence" value="ECO:0007669"/>
    <property type="project" value="TreeGrafter"/>
</dbReference>
<dbReference type="GO" id="GO:0003999">
    <property type="term" value="F:adenine phosphoribosyltransferase activity"/>
    <property type="evidence" value="ECO:0007669"/>
    <property type="project" value="UniProtKB-UniRule"/>
</dbReference>
<dbReference type="GO" id="GO:0016208">
    <property type="term" value="F:AMP binding"/>
    <property type="evidence" value="ECO:0007669"/>
    <property type="project" value="TreeGrafter"/>
</dbReference>
<dbReference type="GO" id="GO:0006168">
    <property type="term" value="P:adenine salvage"/>
    <property type="evidence" value="ECO:0007669"/>
    <property type="project" value="InterPro"/>
</dbReference>
<dbReference type="GO" id="GO:0044209">
    <property type="term" value="P:AMP salvage"/>
    <property type="evidence" value="ECO:0007669"/>
    <property type="project" value="UniProtKB-UniRule"/>
</dbReference>
<dbReference type="GO" id="GO:0006166">
    <property type="term" value="P:purine ribonucleoside salvage"/>
    <property type="evidence" value="ECO:0007669"/>
    <property type="project" value="UniProtKB-KW"/>
</dbReference>
<dbReference type="CDD" id="cd06223">
    <property type="entry name" value="PRTases_typeI"/>
    <property type="match status" value="1"/>
</dbReference>
<dbReference type="FunFam" id="3.40.50.2020:FF:000021">
    <property type="entry name" value="Adenine phosphoribosyltransferase"/>
    <property type="match status" value="1"/>
</dbReference>
<dbReference type="Gene3D" id="3.40.50.2020">
    <property type="match status" value="1"/>
</dbReference>
<dbReference type="HAMAP" id="MF_00004">
    <property type="entry name" value="Aden_phosphoribosyltr"/>
    <property type="match status" value="1"/>
</dbReference>
<dbReference type="InterPro" id="IPR005764">
    <property type="entry name" value="Ade_phspho_trans"/>
</dbReference>
<dbReference type="InterPro" id="IPR000836">
    <property type="entry name" value="PRibTrfase_dom"/>
</dbReference>
<dbReference type="InterPro" id="IPR029057">
    <property type="entry name" value="PRTase-like"/>
</dbReference>
<dbReference type="InterPro" id="IPR050054">
    <property type="entry name" value="UPRTase/APRTase"/>
</dbReference>
<dbReference type="NCBIfam" id="TIGR01090">
    <property type="entry name" value="apt"/>
    <property type="match status" value="1"/>
</dbReference>
<dbReference type="NCBIfam" id="NF002634">
    <property type="entry name" value="PRK02304.1-3"/>
    <property type="match status" value="1"/>
</dbReference>
<dbReference type="NCBIfam" id="NF002636">
    <property type="entry name" value="PRK02304.1-5"/>
    <property type="match status" value="1"/>
</dbReference>
<dbReference type="PANTHER" id="PTHR32315">
    <property type="entry name" value="ADENINE PHOSPHORIBOSYLTRANSFERASE"/>
    <property type="match status" value="1"/>
</dbReference>
<dbReference type="PANTHER" id="PTHR32315:SF3">
    <property type="entry name" value="ADENINE PHOSPHORIBOSYLTRANSFERASE"/>
    <property type="match status" value="1"/>
</dbReference>
<dbReference type="Pfam" id="PF00156">
    <property type="entry name" value="Pribosyltran"/>
    <property type="match status" value="1"/>
</dbReference>
<dbReference type="SUPFAM" id="SSF53271">
    <property type="entry name" value="PRTase-like"/>
    <property type="match status" value="1"/>
</dbReference>
<dbReference type="PROSITE" id="PS00103">
    <property type="entry name" value="PUR_PYR_PR_TRANSFER"/>
    <property type="match status" value="1"/>
</dbReference>
<name>APT_METPB</name>
<feature type="chain" id="PRO_1000116178" description="Adenine phosphoribosyltransferase">
    <location>
        <begin position="1"/>
        <end position="181"/>
    </location>
</feature>
<keyword id="KW-0963">Cytoplasm</keyword>
<keyword id="KW-0328">Glycosyltransferase</keyword>
<keyword id="KW-0660">Purine salvage</keyword>
<keyword id="KW-0808">Transferase</keyword>
<organism>
    <name type="scientific">Methylorubrum populi (strain ATCC BAA-705 / NCIMB 13946 / BJ001)</name>
    <name type="common">Methylobacterium populi</name>
    <dbReference type="NCBI Taxonomy" id="441620"/>
    <lineage>
        <taxon>Bacteria</taxon>
        <taxon>Pseudomonadati</taxon>
        <taxon>Pseudomonadota</taxon>
        <taxon>Alphaproteobacteria</taxon>
        <taxon>Hyphomicrobiales</taxon>
        <taxon>Methylobacteriaceae</taxon>
        <taxon>Methylorubrum</taxon>
    </lineage>
</organism>
<protein>
    <recommendedName>
        <fullName evidence="1">Adenine phosphoribosyltransferase</fullName>
        <shortName evidence="1">APRT</shortName>
        <ecNumber evidence="1">2.4.2.7</ecNumber>
    </recommendedName>
</protein>
<evidence type="ECO:0000255" key="1">
    <source>
        <dbReference type="HAMAP-Rule" id="MF_00004"/>
    </source>
</evidence>
<reference key="1">
    <citation type="submission" date="2008-04" db="EMBL/GenBank/DDBJ databases">
        <title>Complete sequence of chromosome of Methylobacterium populi BJ001.</title>
        <authorList>
            <consortium name="US DOE Joint Genome Institute"/>
            <person name="Copeland A."/>
            <person name="Lucas S."/>
            <person name="Lapidus A."/>
            <person name="Glavina del Rio T."/>
            <person name="Dalin E."/>
            <person name="Tice H."/>
            <person name="Bruce D."/>
            <person name="Goodwin L."/>
            <person name="Pitluck S."/>
            <person name="Chertkov O."/>
            <person name="Brettin T."/>
            <person name="Detter J.C."/>
            <person name="Han C."/>
            <person name="Kuske C.R."/>
            <person name="Schmutz J."/>
            <person name="Larimer F."/>
            <person name="Land M."/>
            <person name="Hauser L."/>
            <person name="Kyrpides N."/>
            <person name="Mikhailova N."/>
            <person name="Marx C."/>
            <person name="Richardson P."/>
        </authorList>
    </citation>
    <scope>NUCLEOTIDE SEQUENCE [LARGE SCALE GENOMIC DNA]</scope>
    <source>
        <strain>ATCC BAA-705 / NCIMB 13946 / BJ001</strain>
    </source>
</reference>
<sequence>MEARRHSALKDSIRSIPDYPKPGIIFRDITTLLSDPRSFRRAVDSLVHPYAGGRIDQVAGIEARGFILGGAVAHQLSSGFVPIRKKGKLPHKTVSTAYALEYGTDEIEIHVDAIKPGDRVILVDDLIATGGTATAAVNLLRQLGAEVIAACFVIDLPEIGGAQRLRDLGVTVRTLMEFEGH</sequence>
<accession>B1ZKA1</accession>
<gene>
    <name evidence="1" type="primary">apt</name>
    <name type="ordered locus">Mpop_0575</name>
</gene>
<comment type="function">
    <text evidence="1">Catalyzes a salvage reaction resulting in the formation of AMP, that is energically less costly than de novo synthesis.</text>
</comment>
<comment type="catalytic activity">
    <reaction evidence="1">
        <text>AMP + diphosphate = 5-phospho-alpha-D-ribose 1-diphosphate + adenine</text>
        <dbReference type="Rhea" id="RHEA:16609"/>
        <dbReference type="ChEBI" id="CHEBI:16708"/>
        <dbReference type="ChEBI" id="CHEBI:33019"/>
        <dbReference type="ChEBI" id="CHEBI:58017"/>
        <dbReference type="ChEBI" id="CHEBI:456215"/>
        <dbReference type="EC" id="2.4.2.7"/>
    </reaction>
</comment>
<comment type="pathway">
    <text evidence="1">Purine metabolism; AMP biosynthesis via salvage pathway; AMP from adenine: step 1/1.</text>
</comment>
<comment type="subunit">
    <text evidence="1">Homodimer.</text>
</comment>
<comment type="subcellular location">
    <subcellularLocation>
        <location evidence="1">Cytoplasm</location>
    </subcellularLocation>
</comment>
<comment type="similarity">
    <text evidence="1">Belongs to the purine/pyrimidine phosphoribosyltransferase family.</text>
</comment>
<proteinExistence type="inferred from homology"/>